<protein>
    <recommendedName>
        <fullName>Sulfite reductase [NADPH] flavoprotein component</fullName>
        <ecNumber>1.8.1.2</ecNumber>
    </recommendedName>
</protein>
<reference key="1">
    <citation type="journal article" date="1994" name="J. Bacteriol.">
        <title>Two divergent MET10 genes, one from Saccharomyces cerevisiae and one from Saccharomyces carlsbergensis, encode the alpha subunit of sulfite reductase and specify potential binding sites for FAD and NADPH.</title>
        <authorList>
            <person name="Hansen J."/>
            <person name="Cherest H."/>
            <person name="Kielland-Brandt M.C."/>
        </authorList>
    </citation>
    <scope>NUCLEOTIDE SEQUENCE [GENOMIC DNA]</scope>
</reference>
<reference key="2">
    <citation type="journal article" date="1995" name="DNA Res.">
        <title>Cloning and sequencing of sulfite reductase alpha subunit gene from Saccharomyces cerevisiae.</title>
        <authorList>
            <person name="Hosseini-Mazinani S.M."/>
            <person name="Koshikawa N."/>
            <person name="Sugimoto K."/>
            <person name="Aoki Y."/>
            <person name="Arisawa M."/>
        </authorList>
    </citation>
    <scope>NUCLEOTIDE SEQUENCE [GENOMIC DNA]</scope>
    <scope>PROTEIN SEQUENCE OF 3-16 AND 684-707</scope>
    <scope>INDUCTION</scope>
</reference>
<reference key="3">
    <citation type="journal article" date="1995" name="Nat. Genet.">
        <title>Analysis of the nucleotide sequence of chromosome VI from Saccharomyces cerevisiae.</title>
        <authorList>
            <person name="Murakami Y."/>
            <person name="Naitou M."/>
            <person name="Hagiwara H."/>
            <person name="Shibata T."/>
            <person name="Ozawa M."/>
            <person name="Sasanuma S."/>
            <person name="Sasanuma M."/>
            <person name="Tsuchiya Y."/>
            <person name="Soeda E."/>
            <person name="Yokoyama K."/>
            <person name="Yamazaki M."/>
            <person name="Tashiro H."/>
            <person name="Eki T."/>
        </authorList>
    </citation>
    <scope>NUCLEOTIDE SEQUENCE [LARGE SCALE GENOMIC DNA]</scope>
    <source>
        <strain>ATCC 204508 / S288c</strain>
    </source>
</reference>
<reference key="4">
    <citation type="journal article" date="2014" name="G3 (Bethesda)">
        <title>The reference genome sequence of Saccharomyces cerevisiae: Then and now.</title>
        <authorList>
            <person name="Engel S.R."/>
            <person name="Dietrich F.S."/>
            <person name="Fisk D.G."/>
            <person name="Binkley G."/>
            <person name="Balakrishnan R."/>
            <person name="Costanzo M.C."/>
            <person name="Dwight S.S."/>
            <person name="Hitz B.C."/>
            <person name="Karra K."/>
            <person name="Nash R.S."/>
            <person name="Weng S."/>
            <person name="Wong E.D."/>
            <person name="Lloyd P."/>
            <person name="Skrzypek M.S."/>
            <person name="Miyasato S.R."/>
            <person name="Simison M."/>
            <person name="Cherry J.M."/>
        </authorList>
    </citation>
    <scope>GENOME REANNOTATION</scope>
    <source>
        <strain>ATCC 204508 / S288c</strain>
    </source>
</reference>
<reference key="5">
    <citation type="journal article" date="1996" name="Yeast">
        <title>Fifteen open reading frames in a 30.8 kb region of the right arm of chromosome VI from Saccharomyces cerevisiae.</title>
        <authorList>
            <person name="Eki T."/>
            <person name="Naitou M."/>
            <person name="Hagiwara H."/>
            <person name="Abe M."/>
            <person name="Ozawa M."/>
            <person name="Sasanuma S."/>
            <person name="Sasanuma M."/>
            <person name="Tsuchiya Y."/>
            <person name="Shibata T."/>
            <person name="Watanabe K."/>
            <person name="Ono A."/>
            <person name="Yamazaki M."/>
            <person name="Tashiro H."/>
            <person name="Hanaoka F."/>
            <person name="Murakami Y."/>
        </authorList>
    </citation>
    <scope>NUCLEOTIDE SEQUENCE [GENOMIC DNA]</scope>
    <source>
        <strain>ATCC 204511 / S288c / AB972</strain>
    </source>
</reference>
<reference key="6">
    <citation type="journal article" date="1995" name="Genes Dev.">
        <title>SMC2, a Saccharomyces cerevisiae gene essential for chromosome segregation and condensation, defines a subgroup within the SMC family.</title>
        <authorList>
            <person name="Strunnikov A.V."/>
            <person name="Hogan E."/>
            <person name="Koshland D."/>
        </authorList>
    </citation>
    <scope>NUCLEOTIDE SEQUENCE [GENOMIC DNA] OF 1015-1035</scope>
</reference>
<reference key="7">
    <citation type="journal article" date="1982" name="Biochim. Biophys. Acta">
        <title>Studies on yeast sulfite reductase. IV. Structure and steady-state kinetics.</title>
        <authorList>
            <person name="Kobayashi K."/>
            <person name="Yoshimoto A."/>
        </authorList>
    </citation>
    <scope>CHARACTERIZATION</scope>
</reference>
<reference key="8">
    <citation type="journal article" date="2003" name="Nature">
        <title>Global analysis of protein expression in yeast.</title>
        <authorList>
            <person name="Ghaemmaghami S."/>
            <person name="Huh W.-K."/>
            <person name="Bower K."/>
            <person name="Howson R.W."/>
            <person name="Belle A."/>
            <person name="Dephoure N."/>
            <person name="O'Shea E.K."/>
            <person name="Weissman J.S."/>
        </authorList>
    </citation>
    <scope>LEVEL OF PROTEIN EXPRESSION [LARGE SCALE ANALYSIS]</scope>
</reference>
<proteinExistence type="evidence at protein level"/>
<gene>
    <name type="primary">MET10</name>
    <name type="ordered locus">YFR030W</name>
</gene>
<dbReference type="EC" id="1.8.1.2"/>
<dbReference type="EMBL" id="L26503">
    <property type="protein sequence ID" value="AAA61982.1"/>
    <property type="molecule type" value="Genomic_DNA"/>
</dbReference>
<dbReference type="EMBL" id="D44610">
    <property type="protein sequence ID" value="BAA08076.1"/>
    <property type="molecule type" value="Genomic_DNA"/>
</dbReference>
<dbReference type="EMBL" id="D50617">
    <property type="protein sequence ID" value="BAA09269.1"/>
    <property type="molecule type" value="Genomic_DNA"/>
</dbReference>
<dbReference type="EMBL" id="U05820">
    <property type="protein sequence ID" value="AAA17417.2"/>
    <property type="molecule type" value="Genomic_DNA"/>
</dbReference>
<dbReference type="EMBL" id="BK006940">
    <property type="protein sequence ID" value="DAA12470.1"/>
    <property type="molecule type" value="Genomic_DNA"/>
</dbReference>
<dbReference type="PIR" id="S56285">
    <property type="entry name" value="S56285"/>
</dbReference>
<dbReference type="RefSeq" id="NP_116686.3">
    <property type="nucleotide sequence ID" value="NM_001179995.3"/>
</dbReference>
<dbReference type="SMR" id="P39692"/>
<dbReference type="BioGRID" id="31185">
    <property type="interactions" value="101"/>
</dbReference>
<dbReference type="ComplexPortal" id="CPX-3163">
    <property type="entry name" value="Sulfite reductase complex (NADPH)"/>
</dbReference>
<dbReference type="DIP" id="DIP-6609N"/>
<dbReference type="FunCoup" id="P39692">
    <property type="interactions" value="555"/>
</dbReference>
<dbReference type="IntAct" id="P39692">
    <property type="interactions" value="22"/>
</dbReference>
<dbReference type="MINT" id="P39692"/>
<dbReference type="STRING" id="4932.YFR030W"/>
<dbReference type="GlyGen" id="P39692">
    <property type="glycosylation" value="2 sites"/>
</dbReference>
<dbReference type="iPTMnet" id="P39692"/>
<dbReference type="PaxDb" id="4932-YFR030W"/>
<dbReference type="PeptideAtlas" id="P39692"/>
<dbReference type="EnsemblFungi" id="YFR030W_mRNA">
    <property type="protein sequence ID" value="YFR030W"/>
    <property type="gene ID" value="YFR030W"/>
</dbReference>
<dbReference type="GeneID" id="850588"/>
<dbReference type="KEGG" id="sce:YFR030W"/>
<dbReference type="AGR" id="SGD:S000001926"/>
<dbReference type="SGD" id="S000001926">
    <property type="gene designation" value="MET10"/>
</dbReference>
<dbReference type="VEuPathDB" id="FungiDB:YFR030W"/>
<dbReference type="eggNOG" id="KOG1158">
    <property type="taxonomic scope" value="Eukaryota"/>
</dbReference>
<dbReference type="HOGENOM" id="CLU_003662_1_0_1"/>
<dbReference type="InParanoid" id="P39692"/>
<dbReference type="OMA" id="DYDRYIF"/>
<dbReference type="OrthoDB" id="1856718at2759"/>
<dbReference type="BioCyc" id="MetaCyc:MONOMER3O-21"/>
<dbReference type="BioCyc" id="YEAST:MONOMER3O-21"/>
<dbReference type="UniPathway" id="UPA00140">
    <property type="reaction ID" value="UER00207"/>
</dbReference>
<dbReference type="BioGRID-ORCS" id="850588">
    <property type="hits" value="2 hits in 10 CRISPR screens"/>
</dbReference>
<dbReference type="PRO" id="PR:P39692"/>
<dbReference type="Proteomes" id="UP000002311">
    <property type="component" value="Chromosome VI"/>
</dbReference>
<dbReference type="RNAct" id="P39692">
    <property type="molecule type" value="protein"/>
</dbReference>
<dbReference type="GO" id="GO:0005737">
    <property type="term" value="C:cytoplasm"/>
    <property type="evidence" value="ECO:0000303"/>
    <property type="project" value="ComplexPortal"/>
</dbReference>
<dbReference type="GO" id="GO:0005829">
    <property type="term" value="C:cytosol"/>
    <property type="evidence" value="ECO:0000318"/>
    <property type="project" value="GO_Central"/>
</dbReference>
<dbReference type="GO" id="GO:0009337">
    <property type="term" value="C:sulfite reductase complex (NADPH)"/>
    <property type="evidence" value="ECO:0000314"/>
    <property type="project" value="SGD"/>
</dbReference>
<dbReference type="GO" id="GO:0050660">
    <property type="term" value="F:flavin adenine dinucleotide binding"/>
    <property type="evidence" value="ECO:0000318"/>
    <property type="project" value="GO_Central"/>
</dbReference>
<dbReference type="GO" id="GO:0010181">
    <property type="term" value="F:FMN binding"/>
    <property type="evidence" value="ECO:0000318"/>
    <property type="project" value="GO_Central"/>
</dbReference>
<dbReference type="GO" id="GO:0016491">
    <property type="term" value="F:oxidoreductase activity"/>
    <property type="evidence" value="ECO:0000318"/>
    <property type="project" value="GO_Central"/>
</dbReference>
<dbReference type="GO" id="GO:0004783">
    <property type="term" value="F:sulfite reductase (NADPH) activity"/>
    <property type="evidence" value="ECO:0007669"/>
    <property type="project" value="UniProtKB-EC"/>
</dbReference>
<dbReference type="GO" id="GO:0070814">
    <property type="term" value="P:hydrogen sulfide biosynthetic process"/>
    <property type="evidence" value="ECO:0007669"/>
    <property type="project" value="UniProtKB-UniPathway"/>
</dbReference>
<dbReference type="GO" id="GO:0000103">
    <property type="term" value="P:sulfate assimilation"/>
    <property type="evidence" value="ECO:0000315"/>
    <property type="project" value="SGD"/>
</dbReference>
<dbReference type="GO" id="GO:0000097">
    <property type="term" value="P:sulfur amino acid biosynthetic process"/>
    <property type="evidence" value="ECO:0000303"/>
    <property type="project" value="ComplexPortal"/>
</dbReference>
<dbReference type="CDD" id="cd06207">
    <property type="entry name" value="CyPoR_like"/>
    <property type="match status" value="1"/>
</dbReference>
<dbReference type="FunFam" id="1.20.990.10:FF:000010">
    <property type="entry name" value="Sulfite reductase [NADPH] flavoprotein component"/>
    <property type="match status" value="1"/>
</dbReference>
<dbReference type="FunFam" id="3.40.50.920:FF:000022">
    <property type="entry name" value="Sulfite reductase alpha subunit"/>
    <property type="match status" value="1"/>
</dbReference>
<dbReference type="FunFam" id="3.40.50.80:FF:000011">
    <property type="entry name" value="Sulfite reductase flavoprotein component"/>
    <property type="match status" value="1"/>
</dbReference>
<dbReference type="Gene3D" id="3.40.50.920">
    <property type="match status" value="1"/>
</dbReference>
<dbReference type="Gene3D" id="3.40.50.970">
    <property type="match status" value="1"/>
</dbReference>
<dbReference type="Gene3D" id="1.20.990.10">
    <property type="entry name" value="NADPH-cytochrome p450 Reductase, Chain A, domain 3"/>
    <property type="match status" value="1"/>
</dbReference>
<dbReference type="Gene3D" id="3.40.50.80">
    <property type="entry name" value="Nucleotide-binding domain of ferredoxin-NADP reductase (FNR) module"/>
    <property type="match status" value="1"/>
</dbReference>
<dbReference type="Gene3D" id="3.40.920.10">
    <property type="entry name" value="Pyruvate-ferredoxin oxidoreductase, PFOR, domain III"/>
    <property type="match status" value="1"/>
</dbReference>
<dbReference type="Gene3D" id="2.40.30.10">
    <property type="entry name" value="Translation factors"/>
    <property type="match status" value="1"/>
</dbReference>
<dbReference type="InterPro" id="IPR003097">
    <property type="entry name" value="CysJ-like_FAD-binding"/>
</dbReference>
<dbReference type="InterPro" id="IPR017927">
    <property type="entry name" value="FAD-bd_FR_type"/>
</dbReference>
<dbReference type="InterPro" id="IPR001709">
    <property type="entry name" value="Flavoprot_Pyr_Nucl_cyt_Rdtase"/>
</dbReference>
<dbReference type="InterPro" id="IPR039261">
    <property type="entry name" value="FNR_nucleotide-bd"/>
</dbReference>
<dbReference type="InterPro" id="IPR023173">
    <property type="entry name" value="NADPH_Cyt_P450_Rdtase_alpha"/>
</dbReference>
<dbReference type="InterPro" id="IPR001433">
    <property type="entry name" value="OxRdtase_FAD/NAD-bd"/>
</dbReference>
<dbReference type="InterPro" id="IPR002869">
    <property type="entry name" value="Pyrv_flavodox_OxRed_cen"/>
</dbReference>
<dbReference type="InterPro" id="IPR017938">
    <property type="entry name" value="Riboflavin_synthase-like_b-brl"/>
</dbReference>
<dbReference type="InterPro" id="IPR009014">
    <property type="entry name" value="Transketo_C/PFOR_II"/>
</dbReference>
<dbReference type="PANTHER" id="PTHR19384">
    <property type="entry name" value="NITRIC OXIDE SYNTHASE-RELATED"/>
    <property type="match status" value="1"/>
</dbReference>
<dbReference type="PANTHER" id="PTHR19384:SF109">
    <property type="entry name" value="SULFITE REDUCTASE [NADPH] FLAVOPROTEIN COMPONENT"/>
    <property type="match status" value="1"/>
</dbReference>
<dbReference type="Pfam" id="PF00667">
    <property type="entry name" value="FAD_binding_1"/>
    <property type="match status" value="1"/>
</dbReference>
<dbReference type="Pfam" id="PF00175">
    <property type="entry name" value="NAD_binding_1"/>
    <property type="match status" value="1"/>
</dbReference>
<dbReference type="PRINTS" id="PR00371">
    <property type="entry name" value="FPNCR"/>
</dbReference>
<dbReference type="SUPFAM" id="SSF52343">
    <property type="entry name" value="Ferredoxin reductase-like, C-terminal NADP-linked domain"/>
    <property type="match status" value="1"/>
</dbReference>
<dbReference type="SUPFAM" id="SSF53323">
    <property type="entry name" value="Pyruvate-ferredoxin oxidoreductase, PFOR, domain III"/>
    <property type="match status" value="1"/>
</dbReference>
<dbReference type="SUPFAM" id="SSF63380">
    <property type="entry name" value="Riboflavin synthase domain-like"/>
    <property type="match status" value="1"/>
</dbReference>
<dbReference type="SUPFAM" id="SSF52922">
    <property type="entry name" value="TK C-terminal domain-like"/>
    <property type="match status" value="1"/>
</dbReference>
<dbReference type="PROSITE" id="PS51384">
    <property type="entry name" value="FAD_FR"/>
    <property type="match status" value="1"/>
</dbReference>
<accession>P39692</accession>
<accession>D6VTR0</accession>
<accession>Q12683</accession>
<sequence length="1035" mass="114829">MPVEFATNPFGEAKNATSLPKYGTPVTAISSVLFNNVDSIFAYKSFSQPDLLHQDLKKWSEKRGNESRGKPFFQELDIRSGAGLAPLGFSHGLKNTTAIVAPGFSLPYFINSLKTVSHDGKFLLNVGALNYDNATGSVTNDYVTALDAASKLKYGVVTPISANEVQSVALLALAIATFSNNSGAINLFDGLNYSKTVLPLVESVPEASILAKLSKVIAPDAAFDDVLDKFNELTGLRLHNFQYFGAQDAETVFITYGSLESELFNSAISGNNSKIGLINVRVPLPFNVAKFVTHVPSTTKQIVVIGQTLDGSSPSFLRSQVSAALFYHGRTSISVSEYIYQPDFIWSPKAVKSIVSSFIPEFTYNADSSFGEGFIYWASDKSINIDVASKLVKALSLEDGKFVSLRTKFDNLANAGTFQAQFVTSKEQIPVSNIDSTKLSVVEDVSLLKHLDVAATVAEQGSIALVSQKAVKDLDLNSVESYVKNLGIPESFLISIAKKNIKLFIIDGETTNDESKLSLFIQAVFWKLAFGLDVAECTNRIWKSIDSGADISAASISEFLTGAFKNFLSEVPLALYTKFSEINIEKKEDEEEPAALPIFVNETSFLPNNSTIEEIPLPETSEISDIAKKLSFKEAYEVENKLRPDLPVKNFVVKVKENRRVTPADYDRYIFHIEFDISGTGMTYDIGEALGIHARNNESLVKEFLTFYGLNESDVVLVPNKDNHHLLETRTVLQAFVENLDIFGKPPKRFYESLIPYASNEEEKKKLEDLVTPAGAVDLKRFQDVEYYTYADIFELFPSVRPSLEELVTIIEPLKRREYSIASSQKVHPNEVHLLIVVVDWVDNKGRKRYGQASKYISDLAVGSELVVSVKPSVMKLPPSPKQPVIMSGLGTGLAPFKAIVEEKLWQKQQGYEIGEVFLYLGSRHKREEYLYGELWEAYKDAGIITHIGAAFSRDQPQKIYIQDRIKENLDELKTAMIDNKGSFYLCGPTWPVPDITQALQDILAKDAEERGIKVDLDAAIEELKEASRYILEVY</sequence>
<evidence type="ECO:0000250" key="1"/>
<evidence type="ECO:0000255" key="2">
    <source>
        <dbReference type="PROSITE-ProRule" id="PRU00716"/>
    </source>
</evidence>
<evidence type="ECO:0000269" key="3">
    <source>
    </source>
</evidence>
<evidence type="ECO:0000269" key="4">
    <source>
    </source>
</evidence>
<evidence type="ECO:0000305" key="5"/>
<comment type="function">
    <text>This enzyme catalyzes the 6-electron reduction of sulfite to sulfide. This is one of several activities required for the biosynthesis of L-cysteine from sulfate.</text>
</comment>
<comment type="catalytic activity">
    <reaction>
        <text>hydrogen sulfide + 3 NADP(+) + 3 H2O = sulfite + 3 NADPH + 4 H(+)</text>
        <dbReference type="Rhea" id="RHEA:13801"/>
        <dbReference type="ChEBI" id="CHEBI:15377"/>
        <dbReference type="ChEBI" id="CHEBI:15378"/>
        <dbReference type="ChEBI" id="CHEBI:17359"/>
        <dbReference type="ChEBI" id="CHEBI:29919"/>
        <dbReference type="ChEBI" id="CHEBI:57783"/>
        <dbReference type="ChEBI" id="CHEBI:58349"/>
        <dbReference type="EC" id="1.8.1.2"/>
    </reaction>
</comment>
<comment type="cofactor">
    <cofactor evidence="1">
        <name>FAD</name>
        <dbReference type="ChEBI" id="CHEBI:57692"/>
    </cofactor>
    <text evidence="1">Binds 1 FAD per subunit.</text>
</comment>
<comment type="cofactor">
    <cofactor evidence="1">
        <name>FMN</name>
        <dbReference type="ChEBI" id="CHEBI:58210"/>
    </cofactor>
    <text evidence="1">Binds 1 FMN per subunit.</text>
</comment>
<comment type="pathway">
    <text>Sulfur metabolism; hydrogen sulfide biosynthesis; hydrogen sulfide from sulfite (NADPH route): step 1/1.</text>
</comment>
<comment type="interaction">
    <interactant intactId="EBI-11476">
        <id>P39692</id>
    </interactant>
    <interactant intactId="EBI-25702">
        <id>P47169</id>
        <label>MET5</label>
    </interactant>
    <organismsDiffer>false</organismsDiffer>
    <experiments>2</experiments>
</comment>
<comment type="induction">
    <text evidence="4">By methionine deprivation.</text>
</comment>
<comment type="miscellaneous">
    <text evidence="3">Present with 1580 molecules/cell in log phase SD medium.</text>
</comment>
<feature type="chain" id="PRO_0000199947" description="Sulfite reductase [NADPH] flavoprotein component">
    <location>
        <begin position="1"/>
        <end position="1035"/>
    </location>
</feature>
<feature type="domain" description="FAD-binding FR-type" evidence="2">
    <location>
        <begin position="648"/>
        <end position="879"/>
    </location>
</feature>
<feature type="binding site" evidence="1">
    <location>
        <begin position="684"/>
        <end position="695"/>
    </location>
    <ligand>
        <name>FAD</name>
        <dbReference type="ChEBI" id="CHEBI:57692"/>
    </ligand>
</feature>
<feature type="binding site" evidence="1">
    <location>
        <begin position="814"/>
        <end position="824"/>
    </location>
    <ligand>
        <name>FAD</name>
        <dbReference type="ChEBI" id="CHEBI:57692"/>
    </ligand>
</feature>
<feature type="sequence conflict" description="In Ref. 2; BAA08076." evidence="5" ref="2">
    <original>A</original>
    <variation>T</variation>
    <location>
        <position position="172"/>
    </location>
</feature>
<feature type="sequence conflict" description="In Ref. 1; AAA61982." evidence="5" ref="1">
    <original>A</original>
    <variation>G</variation>
    <location>
        <position position="420"/>
    </location>
</feature>
<feature type="sequence conflict" description="In Ref. 1; AAA61982." evidence="5" ref="1">
    <original>M</original>
    <variation>V</variation>
    <location>
        <position position="977"/>
    </location>
</feature>
<name>MET10_YEAST</name>
<organism>
    <name type="scientific">Saccharomyces cerevisiae (strain ATCC 204508 / S288c)</name>
    <name type="common">Baker's yeast</name>
    <dbReference type="NCBI Taxonomy" id="559292"/>
    <lineage>
        <taxon>Eukaryota</taxon>
        <taxon>Fungi</taxon>
        <taxon>Dikarya</taxon>
        <taxon>Ascomycota</taxon>
        <taxon>Saccharomycotina</taxon>
        <taxon>Saccharomycetes</taxon>
        <taxon>Saccharomycetales</taxon>
        <taxon>Saccharomycetaceae</taxon>
        <taxon>Saccharomyces</taxon>
    </lineage>
</organism>
<keyword id="KW-0903">Direct protein sequencing</keyword>
<keyword id="KW-0249">Electron transport</keyword>
<keyword id="KW-0274">FAD</keyword>
<keyword id="KW-0285">Flavoprotein</keyword>
<keyword id="KW-0288">FMN</keyword>
<keyword id="KW-0521">NADP</keyword>
<keyword id="KW-0560">Oxidoreductase</keyword>
<keyword id="KW-1185">Reference proteome</keyword>
<keyword id="KW-0813">Transport</keyword>